<protein>
    <recommendedName>
        <fullName>2-C-methyl-D-erythritol 4-phosphate cytidylyltransferase</fullName>
        <ecNumber>2.7.7.60</ecNumber>
    </recommendedName>
    <alternativeName>
        <fullName>4-diphosphocytidyl-2C-methyl-D-erythritol synthase</fullName>
    </alternativeName>
    <alternativeName>
        <fullName>MEP cytidylyltransferase</fullName>
        <shortName>MCT</shortName>
    </alternativeName>
</protein>
<proteinExistence type="inferred from homology"/>
<sequence>MNYELIFLAAGQGKRMNAEKNKMWLDLVGEPIFIHALRPFLADNRCSKVIVVCQETERKHVRKLMQQLDVAEDRVEVVKGGSERQYSVAAGLECCGLESVVLVHDGARPFVTLDIIDRLLLGVKQNKAAICAVQVKDTVKRVIHDVVKETVDRDNLWQIQTPQAFELHILQKAHRLAKKDQFLGTDEASLVERIPYPVAIVQGSYYNIKLTTPEDMPLAKAILGELGGKVND</sequence>
<comment type="function">
    <text evidence="1">Catalyzes the formation of 4-diphosphocytidyl-2-C-methyl-D-erythritol from CTP and 2-C-methyl-D-erythritol 4-phosphate (MEP).</text>
</comment>
<comment type="catalytic activity">
    <reaction>
        <text>2-C-methyl-D-erythritol 4-phosphate + CTP + H(+) = 4-CDP-2-C-methyl-D-erythritol + diphosphate</text>
        <dbReference type="Rhea" id="RHEA:13429"/>
        <dbReference type="ChEBI" id="CHEBI:15378"/>
        <dbReference type="ChEBI" id="CHEBI:33019"/>
        <dbReference type="ChEBI" id="CHEBI:37563"/>
        <dbReference type="ChEBI" id="CHEBI:57823"/>
        <dbReference type="ChEBI" id="CHEBI:58262"/>
        <dbReference type="EC" id="2.7.7.60"/>
    </reaction>
</comment>
<comment type="pathway">
    <text>Isoprenoid biosynthesis; isopentenyl diphosphate biosynthesis via DXP pathway; isopentenyl diphosphate from 1-deoxy-D-xylulose 5-phosphate: step 2/6.</text>
</comment>
<comment type="similarity">
    <text evidence="2">Belongs to the IspD/TarI cytidylyltransferase family. IspD subfamily.</text>
</comment>
<accession>Q92F40</accession>
<gene>
    <name type="primary">ispD</name>
    <name type="ordered locus">lin0267</name>
</gene>
<dbReference type="EC" id="2.7.7.60"/>
<dbReference type="EMBL" id="AL596164">
    <property type="protein sequence ID" value="CAC95500.1"/>
    <property type="molecule type" value="Genomic_DNA"/>
</dbReference>
<dbReference type="PIR" id="AD1466">
    <property type="entry name" value="AD1466"/>
</dbReference>
<dbReference type="RefSeq" id="WP_010990302.1">
    <property type="nucleotide sequence ID" value="NC_003212.1"/>
</dbReference>
<dbReference type="SMR" id="Q92F40"/>
<dbReference type="STRING" id="272626.gene:17564594"/>
<dbReference type="KEGG" id="lin:lin0267"/>
<dbReference type="eggNOG" id="COG1211">
    <property type="taxonomic scope" value="Bacteria"/>
</dbReference>
<dbReference type="HOGENOM" id="CLU_061281_2_2_9"/>
<dbReference type="OrthoDB" id="9806837at2"/>
<dbReference type="UniPathway" id="UPA00056">
    <property type="reaction ID" value="UER00093"/>
</dbReference>
<dbReference type="Proteomes" id="UP000002513">
    <property type="component" value="Chromosome"/>
</dbReference>
<dbReference type="GO" id="GO:0050518">
    <property type="term" value="F:2-C-methyl-D-erythritol 4-phosphate cytidylyltransferase activity"/>
    <property type="evidence" value="ECO:0007669"/>
    <property type="project" value="UniProtKB-UniRule"/>
</dbReference>
<dbReference type="GO" id="GO:0019288">
    <property type="term" value="P:isopentenyl diphosphate biosynthetic process, methylerythritol 4-phosphate pathway"/>
    <property type="evidence" value="ECO:0007669"/>
    <property type="project" value="UniProtKB-UniRule"/>
</dbReference>
<dbReference type="CDD" id="cd02516">
    <property type="entry name" value="CDP-ME_synthetase"/>
    <property type="match status" value="1"/>
</dbReference>
<dbReference type="FunFam" id="3.90.550.10:FF:000003">
    <property type="entry name" value="2-C-methyl-D-erythritol 4-phosphate cytidylyltransferase"/>
    <property type="match status" value="1"/>
</dbReference>
<dbReference type="Gene3D" id="3.90.550.10">
    <property type="entry name" value="Spore Coat Polysaccharide Biosynthesis Protein SpsA, Chain A"/>
    <property type="match status" value="1"/>
</dbReference>
<dbReference type="HAMAP" id="MF_00108">
    <property type="entry name" value="IspD"/>
    <property type="match status" value="1"/>
</dbReference>
<dbReference type="InterPro" id="IPR001228">
    <property type="entry name" value="IspD"/>
</dbReference>
<dbReference type="InterPro" id="IPR034683">
    <property type="entry name" value="IspD/TarI"/>
</dbReference>
<dbReference type="InterPro" id="IPR050088">
    <property type="entry name" value="IspD/TarI_cytidylyltransf_bact"/>
</dbReference>
<dbReference type="InterPro" id="IPR018294">
    <property type="entry name" value="ISPD_synthase_CS"/>
</dbReference>
<dbReference type="InterPro" id="IPR029044">
    <property type="entry name" value="Nucleotide-diphossugar_trans"/>
</dbReference>
<dbReference type="NCBIfam" id="TIGR00453">
    <property type="entry name" value="ispD"/>
    <property type="match status" value="1"/>
</dbReference>
<dbReference type="NCBIfam" id="NF009924">
    <property type="entry name" value="PRK13385.1"/>
    <property type="match status" value="1"/>
</dbReference>
<dbReference type="PANTHER" id="PTHR32125">
    <property type="entry name" value="2-C-METHYL-D-ERYTHRITOL 4-PHOSPHATE CYTIDYLYLTRANSFERASE, CHLOROPLASTIC"/>
    <property type="match status" value="1"/>
</dbReference>
<dbReference type="PANTHER" id="PTHR32125:SF4">
    <property type="entry name" value="2-C-METHYL-D-ERYTHRITOL 4-PHOSPHATE CYTIDYLYLTRANSFERASE, CHLOROPLASTIC"/>
    <property type="match status" value="1"/>
</dbReference>
<dbReference type="Pfam" id="PF01128">
    <property type="entry name" value="IspD"/>
    <property type="match status" value="1"/>
</dbReference>
<dbReference type="SUPFAM" id="SSF53448">
    <property type="entry name" value="Nucleotide-diphospho-sugar transferases"/>
    <property type="match status" value="1"/>
</dbReference>
<dbReference type="PROSITE" id="PS01295">
    <property type="entry name" value="ISPD"/>
    <property type="match status" value="1"/>
</dbReference>
<feature type="chain" id="PRO_0000075583" description="2-C-methyl-D-erythritol 4-phosphate cytidylyltransferase">
    <location>
        <begin position="1"/>
        <end position="232"/>
    </location>
</feature>
<feature type="site" description="Transition state stabilizer" evidence="1">
    <location>
        <position position="15"/>
    </location>
</feature>
<feature type="site" description="Transition state stabilizer" evidence="1">
    <location>
        <position position="22"/>
    </location>
</feature>
<feature type="site" description="Positions MEP for the nucleophilic attack" evidence="1">
    <location>
        <position position="153"/>
    </location>
</feature>
<feature type="site" description="Positions MEP for the nucleophilic attack" evidence="1">
    <location>
        <position position="209"/>
    </location>
</feature>
<keyword id="KW-0414">Isoprene biosynthesis</keyword>
<keyword id="KW-0548">Nucleotidyltransferase</keyword>
<keyword id="KW-0808">Transferase</keyword>
<reference key="1">
    <citation type="journal article" date="2001" name="Science">
        <title>Comparative genomics of Listeria species.</title>
        <authorList>
            <person name="Glaser P."/>
            <person name="Frangeul L."/>
            <person name="Buchrieser C."/>
            <person name="Rusniok C."/>
            <person name="Amend A."/>
            <person name="Baquero F."/>
            <person name="Berche P."/>
            <person name="Bloecker H."/>
            <person name="Brandt P."/>
            <person name="Chakraborty T."/>
            <person name="Charbit A."/>
            <person name="Chetouani F."/>
            <person name="Couve E."/>
            <person name="de Daruvar A."/>
            <person name="Dehoux P."/>
            <person name="Domann E."/>
            <person name="Dominguez-Bernal G."/>
            <person name="Duchaud E."/>
            <person name="Durant L."/>
            <person name="Dussurget O."/>
            <person name="Entian K.-D."/>
            <person name="Fsihi H."/>
            <person name="Garcia-del Portillo F."/>
            <person name="Garrido P."/>
            <person name="Gautier L."/>
            <person name="Goebel W."/>
            <person name="Gomez-Lopez N."/>
            <person name="Hain T."/>
            <person name="Hauf J."/>
            <person name="Jackson D."/>
            <person name="Jones L.-M."/>
            <person name="Kaerst U."/>
            <person name="Kreft J."/>
            <person name="Kuhn M."/>
            <person name="Kunst F."/>
            <person name="Kurapkat G."/>
            <person name="Madueno E."/>
            <person name="Maitournam A."/>
            <person name="Mata Vicente J."/>
            <person name="Ng E."/>
            <person name="Nedjari H."/>
            <person name="Nordsiek G."/>
            <person name="Novella S."/>
            <person name="de Pablos B."/>
            <person name="Perez-Diaz J.-C."/>
            <person name="Purcell R."/>
            <person name="Remmel B."/>
            <person name="Rose M."/>
            <person name="Schlueter T."/>
            <person name="Simoes N."/>
            <person name="Tierrez A."/>
            <person name="Vazquez-Boland J.-A."/>
            <person name="Voss H."/>
            <person name="Wehland J."/>
            <person name="Cossart P."/>
        </authorList>
    </citation>
    <scope>NUCLEOTIDE SEQUENCE [LARGE SCALE GENOMIC DNA]</scope>
    <source>
        <strain>ATCC BAA-680 / CLIP 11262</strain>
    </source>
</reference>
<organism>
    <name type="scientific">Listeria innocua serovar 6a (strain ATCC BAA-680 / CLIP 11262)</name>
    <dbReference type="NCBI Taxonomy" id="272626"/>
    <lineage>
        <taxon>Bacteria</taxon>
        <taxon>Bacillati</taxon>
        <taxon>Bacillota</taxon>
        <taxon>Bacilli</taxon>
        <taxon>Bacillales</taxon>
        <taxon>Listeriaceae</taxon>
        <taxon>Listeria</taxon>
    </lineage>
</organism>
<name>ISPD_LISIN</name>
<evidence type="ECO:0000250" key="1"/>
<evidence type="ECO:0000305" key="2"/>